<sequence length="475" mass="52594">MSPQTETKASVGFKAGVKDYRLTYYTPEYETQDTDILAAFRVSPQPGVPPEEAGAAVAAESSTGTWTSVWTDGLTNLDRYKGRCYNIEPVAGEENQYICYVAYPLDLFEEGSVTNMFTSIVGNVFGFKALRALRLEDLRIPVAYVKTFQGPPHGIQVERDKLNKYGRPLLGCTIKPKLGLSAKNYGRACYECLRGGLDFTKDDENVNSQPFMRWRDRFLFCAEAIYKSQAETGEIKGHYLNATAGTCEEMIKRAVFARELGVPIVMHDYLTGGFTANTSLSQYCRDNGLLLHIHVAMHAVIDRQKNHGMHFRVLAKALRLSGGDHIHSGTVVGKLEGERDITLGFVDLLRDDYTEKDRCRGIFFTQSWVSTPGVLPVASGGIHVWHMPALTEIFGDDSVLQFGGGTLGHPWGNAPGAVANRVALEACVQARNEGRDLAREGNTIIREAAKWSPELAAACEVWKEIKFEFPAMDTI</sequence>
<gene>
    <name evidence="1" type="primary">rbcL</name>
</gene>
<geneLocation type="chloroplast"/>
<proteinExistence type="inferred from homology"/>
<name>RBL_AMAHP</name>
<reference key="1">
    <citation type="journal article" date="1990" name="Nucleic Acids Res.">
        <title>Nucleotide sequence of rbcL from Amaranthus hypochondriacus chloroplasts.</title>
        <authorList>
            <person name="Michalowski C.B."/>
            <person name="Bohnert H.J."/>
            <person name="Klessig D.F."/>
            <person name="Berry J.O."/>
        </authorList>
    </citation>
    <scope>NUCLEOTIDE SEQUENCE [GENOMIC DNA]</scope>
    <source>
        <strain>1023</strain>
    </source>
</reference>
<evidence type="ECO:0000255" key="1">
    <source>
        <dbReference type="HAMAP-Rule" id="MF_01338"/>
    </source>
</evidence>
<feature type="propeptide" id="PRO_0000031109" evidence="1">
    <location>
        <begin position="1"/>
        <end position="2"/>
    </location>
</feature>
<feature type="chain" id="PRO_0000031110" description="Ribulose bisphosphate carboxylase large chain">
    <location>
        <begin position="3"/>
        <end position="475"/>
    </location>
</feature>
<feature type="active site" description="Proton acceptor" evidence="1">
    <location>
        <position position="175"/>
    </location>
</feature>
<feature type="active site" description="Proton acceptor" evidence="1">
    <location>
        <position position="294"/>
    </location>
</feature>
<feature type="binding site" description="in homodimeric partner" evidence="1">
    <location>
        <position position="123"/>
    </location>
    <ligand>
        <name>substrate</name>
    </ligand>
</feature>
<feature type="binding site" evidence="1">
    <location>
        <position position="173"/>
    </location>
    <ligand>
        <name>substrate</name>
    </ligand>
</feature>
<feature type="binding site" evidence="1">
    <location>
        <position position="177"/>
    </location>
    <ligand>
        <name>substrate</name>
    </ligand>
</feature>
<feature type="binding site" description="via carbamate group" evidence="1">
    <location>
        <position position="201"/>
    </location>
    <ligand>
        <name>Mg(2+)</name>
        <dbReference type="ChEBI" id="CHEBI:18420"/>
    </ligand>
</feature>
<feature type="binding site" evidence="1">
    <location>
        <position position="203"/>
    </location>
    <ligand>
        <name>Mg(2+)</name>
        <dbReference type="ChEBI" id="CHEBI:18420"/>
    </ligand>
</feature>
<feature type="binding site" evidence="1">
    <location>
        <position position="204"/>
    </location>
    <ligand>
        <name>Mg(2+)</name>
        <dbReference type="ChEBI" id="CHEBI:18420"/>
    </ligand>
</feature>
<feature type="binding site" evidence="1">
    <location>
        <position position="327"/>
    </location>
    <ligand>
        <name>substrate</name>
    </ligand>
</feature>
<feature type="binding site" evidence="1">
    <location>
        <position position="379"/>
    </location>
    <ligand>
        <name>substrate</name>
    </ligand>
</feature>
<feature type="site" description="Transition state stabilizer" evidence="1">
    <location>
        <position position="334"/>
    </location>
</feature>
<feature type="modified residue" description="N-acetylproline" evidence="1">
    <location>
        <position position="3"/>
    </location>
</feature>
<feature type="modified residue" description="N6,N6,N6-trimethyllysine" evidence="1">
    <location>
        <position position="14"/>
    </location>
</feature>
<feature type="modified residue" description="N6-carboxylysine" evidence="1">
    <location>
        <position position="201"/>
    </location>
</feature>
<feature type="disulfide bond" description="Interchain; in linked form" evidence="1">
    <location>
        <position position="247"/>
    </location>
</feature>
<organism>
    <name type="scientific">Amaranthus hypochondriacus</name>
    <name type="common">Prince-of-Wales feather</name>
    <name type="synonym">Amaranthus hybridus var. hypochondriacus</name>
    <dbReference type="NCBI Taxonomy" id="28502"/>
    <lineage>
        <taxon>Eukaryota</taxon>
        <taxon>Viridiplantae</taxon>
        <taxon>Streptophyta</taxon>
        <taxon>Embryophyta</taxon>
        <taxon>Tracheophyta</taxon>
        <taxon>Spermatophyta</taxon>
        <taxon>Magnoliopsida</taxon>
        <taxon>eudicotyledons</taxon>
        <taxon>Gunneridae</taxon>
        <taxon>Pentapetalae</taxon>
        <taxon>Caryophyllales</taxon>
        <taxon>Amaranthaceae</taxon>
        <taxon>Amaranthus</taxon>
    </lineage>
</organism>
<keyword id="KW-0007">Acetylation</keyword>
<keyword id="KW-0113">Calvin cycle</keyword>
<keyword id="KW-0120">Carbon dioxide fixation</keyword>
<keyword id="KW-0150">Chloroplast</keyword>
<keyword id="KW-1015">Disulfide bond</keyword>
<keyword id="KW-0456">Lyase</keyword>
<keyword id="KW-0460">Magnesium</keyword>
<keyword id="KW-0479">Metal-binding</keyword>
<keyword id="KW-0488">Methylation</keyword>
<keyword id="KW-0503">Monooxygenase</keyword>
<keyword id="KW-0560">Oxidoreductase</keyword>
<keyword id="KW-0601">Photorespiration</keyword>
<keyword id="KW-0602">Photosynthesis</keyword>
<keyword id="KW-0934">Plastid</keyword>
<accession>P16306</accession>
<dbReference type="EC" id="4.1.1.39" evidence="1"/>
<dbReference type="EMBL" id="X51964">
    <property type="protein sequence ID" value="CAA36223.1"/>
    <property type="molecule type" value="Genomic_DNA"/>
</dbReference>
<dbReference type="PIR" id="S15931">
    <property type="entry name" value="RKMHLP"/>
</dbReference>
<dbReference type="SMR" id="P16306"/>
<dbReference type="GO" id="GO:0009507">
    <property type="term" value="C:chloroplast"/>
    <property type="evidence" value="ECO:0007669"/>
    <property type="project" value="UniProtKB-SubCell"/>
</dbReference>
<dbReference type="GO" id="GO:0000287">
    <property type="term" value="F:magnesium ion binding"/>
    <property type="evidence" value="ECO:0007669"/>
    <property type="project" value="UniProtKB-UniRule"/>
</dbReference>
<dbReference type="GO" id="GO:0004497">
    <property type="term" value="F:monooxygenase activity"/>
    <property type="evidence" value="ECO:0007669"/>
    <property type="project" value="UniProtKB-KW"/>
</dbReference>
<dbReference type="GO" id="GO:0016984">
    <property type="term" value="F:ribulose-bisphosphate carboxylase activity"/>
    <property type="evidence" value="ECO:0007669"/>
    <property type="project" value="UniProtKB-UniRule"/>
</dbReference>
<dbReference type="GO" id="GO:0009853">
    <property type="term" value="P:photorespiration"/>
    <property type="evidence" value="ECO:0007669"/>
    <property type="project" value="UniProtKB-KW"/>
</dbReference>
<dbReference type="GO" id="GO:0019253">
    <property type="term" value="P:reductive pentose-phosphate cycle"/>
    <property type="evidence" value="ECO:0007669"/>
    <property type="project" value="UniProtKB-UniRule"/>
</dbReference>
<dbReference type="CDD" id="cd08212">
    <property type="entry name" value="RuBisCO_large_I"/>
    <property type="match status" value="1"/>
</dbReference>
<dbReference type="FunFam" id="3.20.20.110:FF:000001">
    <property type="entry name" value="Ribulose bisphosphate carboxylase large chain"/>
    <property type="match status" value="1"/>
</dbReference>
<dbReference type="FunFam" id="3.30.70.150:FF:000001">
    <property type="entry name" value="Ribulose bisphosphate carboxylase large chain"/>
    <property type="match status" value="1"/>
</dbReference>
<dbReference type="Gene3D" id="3.20.20.110">
    <property type="entry name" value="Ribulose bisphosphate carboxylase, large subunit, C-terminal domain"/>
    <property type="match status" value="1"/>
</dbReference>
<dbReference type="Gene3D" id="3.30.70.150">
    <property type="entry name" value="RuBisCO large subunit, N-terminal domain"/>
    <property type="match status" value="1"/>
</dbReference>
<dbReference type="HAMAP" id="MF_01338">
    <property type="entry name" value="RuBisCO_L_type1"/>
    <property type="match status" value="1"/>
</dbReference>
<dbReference type="InterPro" id="IPR033966">
    <property type="entry name" value="RuBisCO"/>
</dbReference>
<dbReference type="InterPro" id="IPR020878">
    <property type="entry name" value="RuBisCo_large_chain_AS"/>
</dbReference>
<dbReference type="InterPro" id="IPR000685">
    <property type="entry name" value="RuBisCO_lsu_C"/>
</dbReference>
<dbReference type="InterPro" id="IPR036376">
    <property type="entry name" value="RuBisCO_lsu_C_sf"/>
</dbReference>
<dbReference type="InterPro" id="IPR017443">
    <property type="entry name" value="RuBisCO_lsu_fd_N"/>
</dbReference>
<dbReference type="InterPro" id="IPR036422">
    <property type="entry name" value="RuBisCO_lsu_N_sf"/>
</dbReference>
<dbReference type="InterPro" id="IPR020888">
    <property type="entry name" value="RuBisCO_lsuI"/>
</dbReference>
<dbReference type="NCBIfam" id="NF003252">
    <property type="entry name" value="PRK04208.1"/>
    <property type="match status" value="1"/>
</dbReference>
<dbReference type="PANTHER" id="PTHR42704">
    <property type="entry name" value="RIBULOSE BISPHOSPHATE CARBOXYLASE"/>
    <property type="match status" value="1"/>
</dbReference>
<dbReference type="PANTHER" id="PTHR42704:SF15">
    <property type="entry name" value="RIBULOSE BISPHOSPHATE CARBOXYLASE LARGE CHAIN"/>
    <property type="match status" value="1"/>
</dbReference>
<dbReference type="Pfam" id="PF00016">
    <property type="entry name" value="RuBisCO_large"/>
    <property type="match status" value="1"/>
</dbReference>
<dbReference type="Pfam" id="PF02788">
    <property type="entry name" value="RuBisCO_large_N"/>
    <property type="match status" value="1"/>
</dbReference>
<dbReference type="SFLD" id="SFLDS00014">
    <property type="entry name" value="RuBisCO"/>
    <property type="match status" value="1"/>
</dbReference>
<dbReference type="SFLD" id="SFLDG00301">
    <property type="entry name" value="RuBisCO-like_proteins"/>
    <property type="match status" value="1"/>
</dbReference>
<dbReference type="SUPFAM" id="SSF51649">
    <property type="entry name" value="RuBisCo, C-terminal domain"/>
    <property type="match status" value="1"/>
</dbReference>
<dbReference type="SUPFAM" id="SSF54966">
    <property type="entry name" value="RuBisCO, large subunit, small (N-terminal) domain"/>
    <property type="match status" value="1"/>
</dbReference>
<dbReference type="PROSITE" id="PS00157">
    <property type="entry name" value="RUBISCO_LARGE"/>
    <property type="match status" value="1"/>
</dbReference>
<comment type="function">
    <text evidence="1">RuBisCO catalyzes two reactions: the carboxylation of D-ribulose 1,5-bisphosphate, the primary event in carbon dioxide fixation, as well as the oxidative fragmentation of the pentose substrate in the photorespiration process. Both reactions occur simultaneously and in competition at the same active site.</text>
</comment>
<comment type="catalytic activity">
    <reaction evidence="1">
        <text>2 (2R)-3-phosphoglycerate + 2 H(+) = D-ribulose 1,5-bisphosphate + CO2 + H2O</text>
        <dbReference type="Rhea" id="RHEA:23124"/>
        <dbReference type="ChEBI" id="CHEBI:15377"/>
        <dbReference type="ChEBI" id="CHEBI:15378"/>
        <dbReference type="ChEBI" id="CHEBI:16526"/>
        <dbReference type="ChEBI" id="CHEBI:57870"/>
        <dbReference type="ChEBI" id="CHEBI:58272"/>
        <dbReference type="EC" id="4.1.1.39"/>
    </reaction>
</comment>
<comment type="catalytic activity">
    <reaction evidence="1">
        <text>D-ribulose 1,5-bisphosphate + O2 = 2-phosphoglycolate + (2R)-3-phosphoglycerate + 2 H(+)</text>
        <dbReference type="Rhea" id="RHEA:36631"/>
        <dbReference type="ChEBI" id="CHEBI:15378"/>
        <dbReference type="ChEBI" id="CHEBI:15379"/>
        <dbReference type="ChEBI" id="CHEBI:57870"/>
        <dbReference type="ChEBI" id="CHEBI:58033"/>
        <dbReference type="ChEBI" id="CHEBI:58272"/>
    </reaction>
</comment>
<comment type="cofactor">
    <cofactor evidence="1">
        <name>Mg(2+)</name>
        <dbReference type="ChEBI" id="CHEBI:18420"/>
    </cofactor>
    <text evidence="1">Binds 1 Mg(2+) ion per subunit.</text>
</comment>
<comment type="subunit">
    <text evidence="1">Heterohexadecamer of 8 large chains and 8 small chains; disulfide-linked. The disulfide link is formed within the large subunit homodimers.</text>
</comment>
<comment type="subcellular location">
    <subcellularLocation>
        <location>Plastid</location>
        <location>Chloroplast</location>
    </subcellularLocation>
</comment>
<comment type="PTM">
    <text evidence="1">The disulfide bond which can form in the large chain dimeric partners within the hexadecamer appears to be associated with oxidative stress and protein turnover.</text>
</comment>
<comment type="miscellaneous">
    <text evidence="1">The basic functional RuBisCO is composed of a large chain homodimer in a 'head-to-tail' conformation. In form I RuBisCO this homodimer is arranged in a barrel-like tetramer with the small subunits forming a tetrameric 'cap' on each end of the 'barrel'.</text>
</comment>
<comment type="similarity">
    <text evidence="1">Belongs to the RuBisCO large chain family. Type I subfamily.</text>
</comment>
<protein>
    <recommendedName>
        <fullName evidence="1">Ribulose bisphosphate carboxylase large chain</fullName>
        <shortName evidence="1">RuBisCO large subunit</shortName>
        <ecNumber evidence="1">4.1.1.39</ecNumber>
    </recommendedName>
</protein>